<sequence length="146" mass="16281">MHSSLETTAPATLERRESNLGDKLILKGLKFYGFHGAIAEERTLGQMFLVDIDAWVSLKKAGESDNLEDTISYVDIFSLAKEIVEGSPRNLLETVAELIASKTLEKFHQINAVRVKLSKPNVALIKSTIDYLGVDIFRQRNTSSKN</sequence>
<reference key="1">
    <citation type="journal article" date="2000" name="Nature">
        <title>Sequence and analysis of chromosome 3 of the plant Arabidopsis thaliana.</title>
        <authorList>
            <person name="Salanoubat M."/>
            <person name="Lemcke K."/>
            <person name="Rieger M."/>
            <person name="Ansorge W."/>
            <person name="Unseld M."/>
            <person name="Fartmann B."/>
            <person name="Valle G."/>
            <person name="Bloecker H."/>
            <person name="Perez-Alonso M."/>
            <person name="Obermaier B."/>
            <person name="Delseny M."/>
            <person name="Boutry M."/>
            <person name="Grivell L.A."/>
            <person name="Mache R."/>
            <person name="Puigdomenech P."/>
            <person name="De Simone V."/>
            <person name="Choisne N."/>
            <person name="Artiguenave F."/>
            <person name="Robert C."/>
            <person name="Brottier P."/>
            <person name="Wincker P."/>
            <person name="Cattolico L."/>
            <person name="Weissenbach J."/>
            <person name="Saurin W."/>
            <person name="Quetier F."/>
            <person name="Schaefer M."/>
            <person name="Mueller-Auer S."/>
            <person name="Gabel C."/>
            <person name="Fuchs M."/>
            <person name="Benes V."/>
            <person name="Wurmbach E."/>
            <person name="Drzonek H."/>
            <person name="Erfle H."/>
            <person name="Jordan N."/>
            <person name="Bangert S."/>
            <person name="Wiedelmann R."/>
            <person name="Kranz H."/>
            <person name="Voss H."/>
            <person name="Holland R."/>
            <person name="Brandt P."/>
            <person name="Nyakatura G."/>
            <person name="Vezzi A."/>
            <person name="D'Angelo M."/>
            <person name="Pallavicini A."/>
            <person name="Toppo S."/>
            <person name="Simionati B."/>
            <person name="Conrad A."/>
            <person name="Hornischer K."/>
            <person name="Kauer G."/>
            <person name="Loehnert T.-H."/>
            <person name="Nordsiek G."/>
            <person name="Reichelt J."/>
            <person name="Scharfe M."/>
            <person name="Schoen O."/>
            <person name="Bargues M."/>
            <person name="Terol J."/>
            <person name="Climent J."/>
            <person name="Navarro P."/>
            <person name="Collado C."/>
            <person name="Perez-Perez A."/>
            <person name="Ottenwaelder B."/>
            <person name="Duchemin D."/>
            <person name="Cooke R."/>
            <person name="Laudie M."/>
            <person name="Berger-Llauro C."/>
            <person name="Purnelle B."/>
            <person name="Masuy D."/>
            <person name="de Haan M."/>
            <person name="Maarse A.C."/>
            <person name="Alcaraz J.-P."/>
            <person name="Cottet A."/>
            <person name="Casacuberta E."/>
            <person name="Monfort A."/>
            <person name="Argiriou A."/>
            <person name="Flores M."/>
            <person name="Liguori R."/>
            <person name="Vitale D."/>
            <person name="Mannhaupt G."/>
            <person name="Haase D."/>
            <person name="Schoof H."/>
            <person name="Rudd S."/>
            <person name="Zaccaria P."/>
            <person name="Mewes H.-W."/>
            <person name="Mayer K.F.X."/>
            <person name="Kaul S."/>
            <person name="Town C.D."/>
            <person name="Koo H.L."/>
            <person name="Tallon L.J."/>
            <person name="Jenkins J."/>
            <person name="Rooney T."/>
            <person name="Rizzo M."/>
            <person name="Walts A."/>
            <person name="Utterback T."/>
            <person name="Fujii C.Y."/>
            <person name="Shea T.P."/>
            <person name="Creasy T.H."/>
            <person name="Haas B."/>
            <person name="Maiti R."/>
            <person name="Wu D."/>
            <person name="Peterson J."/>
            <person name="Van Aken S."/>
            <person name="Pai G."/>
            <person name="Militscher J."/>
            <person name="Sellers P."/>
            <person name="Gill J.E."/>
            <person name="Feldblyum T.V."/>
            <person name="Preuss D."/>
            <person name="Lin X."/>
            <person name="Nierman W.C."/>
            <person name="Salzberg S.L."/>
            <person name="White O."/>
            <person name="Venter J.C."/>
            <person name="Fraser C.M."/>
            <person name="Kaneko T."/>
            <person name="Nakamura Y."/>
            <person name="Sato S."/>
            <person name="Kato T."/>
            <person name="Asamizu E."/>
            <person name="Sasamoto S."/>
            <person name="Kimura T."/>
            <person name="Idesawa K."/>
            <person name="Kawashima K."/>
            <person name="Kishida Y."/>
            <person name="Kiyokawa C."/>
            <person name="Kohara M."/>
            <person name="Matsumoto M."/>
            <person name="Matsuno A."/>
            <person name="Muraki A."/>
            <person name="Nakayama S."/>
            <person name="Nakazaki N."/>
            <person name="Shinpo S."/>
            <person name="Takeuchi C."/>
            <person name="Wada T."/>
            <person name="Watanabe A."/>
            <person name="Yamada M."/>
            <person name="Yasuda M."/>
            <person name="Tabata S."/>
        </authorList>
    </citation>
    <scope>NUCLEOTIDE SEQUENCE [LARGE SCALE GENOMIC DNA]</scope>
    <source>
        <strain>cv. Columbia</strain>
    </source>
</reference>
<reference key="2">
    <citation type="journal article" date="2017" name="Plant J.">
        <title>Araport11: a complete reannotation of the Arabidopsis thaliana reference genome.</title>
        <authorList>
            <person name="Cheng C.Y."/>
            <person name="Krishnakumar V."/>
            <person name="Chan A.P."/>
            <person name="Thibaud-Nissen F."/>
            <person name="Schobel S."/>
            <person name="Town C.D."/>
        </authorList>
    </citation>
    <scope>GENOME REANNOTATION</scope>
    <source>
        <strain>cv. Columbia</strain>
    </source>
</reference>
<reference key="3">
    <citation type="submission" date="2007-01" db="EMBL/GenBank/DDBJ databases">
        <title>Arabidopsis ORF clones.</title>
        <authorList>
            <person name="Kim C.J."/>
            <person name="Bautista V.R."/>
            <person name="Chen H."/>
            <person name="De Los Reyes C."/>
            <person name="Wu S.Y."/>
            <person name="Ecker J.R."/>
        </authorList>
    </citation>
    <scope>NUCLEOTIDE SEQUENCE [LARGE SCALE MRNA]</scope>
</reference>
<reference key="4">
    <citation type="journal article" date="2004" name="J. Mol. Biol.">
        <title>Biosynthesis of tetrahydrofolate in plants: crystal structure of 7,8-dihydroneopterin aldolase from Arabidopsis thaliana reveals a novel adolase class.</title>
        <authorList>
            <person name="Bauer S."/>
            <person name="Schott A.K."/>
            <person name="Illarionova V."/>
            <person name="Bacher A."/>
            <person name="Huber R."/>
            <person name="Fischer M."/>
        </authorList>
    </citation>
    <scope>NUCLEOTIDE SEQUENCE [MRNA] OF 22-146</scope>
    <scope>PROTEIN SEQUENCE OF 22-31</scope>
    <scope>X-RAY CRYSTALLOGRAPHY (2.2 ANGSTROMS)</scope>
    <scope>FUNCTION</scope>
    <scope>CATALYTIC ACTIVITY</scope>
    <scope>ACTIVE SITE</scope>
    <scope>SUBUNIT</scope>
</reference>
<reference key="5">
    <citation type="journal article" date="2004" name="Plant Physiol.">
        <title>Folate biosynthesis in higher plants. cDNA cloning, heterologous expression, and characterization of dihydroneopterin aldolases.</title>
        <authorList>
            <person name="Goyer A."/>
            <person name="Illarionova V."/>
            <person name="Roje S."/>
            <person name="Fischer M."/>
            <person name="Bacher A."/>
            <person name="Hanson A.D."/>
        </authorList>
    </citation>
    <scope>FUNCTION</scope>
    <scope>CATALYTIC ACTIVITY</scope>
    <scope>TISSUE SPECIFICITY</scope>
</reference>
<dbReference type="EC" id="4.1.2.25" evidence="2 3"/>
<dbReference type="EMBL" id="AC016795">
    <property type="protein sequence ID" value="AAF23191.1"/>
    <property type="molecule type" value="Genomic_DNA"/>
</dbReference>
<dbReference type="EMBL" id="CP002686">
    <property type="protein sequence ID" value="AEE75093.1"/>
    <property type="molecule type" value="Genomic_DNA"/>
</dbReference>
<dbReference type="EMBL" id="BT030075">
    <property type="protein sequence ID" value="ABN04813.1"/>
    <property type="molecule type" value="mRNA"/>
</dbReference>
<dbReference type="EMBL" id="AY507667">
    <property type="protein sequence ID" value="AAR88082.1"/>
    <property type="molecule type" value="mRNA"/>
</dbReference>
<dbReference type="RefSeq" id="NP_187781.1">
    <property type="nucleotide sequence ID" value="NM_112008.2"/>
</dbReference>
<dbReference type="PDB" id="1SQL">
    <property type="method" value="X-ray"/>
    <property type="resolution" value="2.20 A"/>
    <property type="chains" value="A/B/C/D/E/F/G/H/I/J/K/L/M/N/O/P=1-146"/>
</dbReference>
<dbReference type="PDBsum" id="1SQL"/>
<dbReference type="SMR" id="Q9SF23"/>
<dbReference type="BioGRID" id="5682">
    <property type="interactions" value="1"/>
</dbReference>
<dbReference type="FunCoup" id="Q9SF23">
    <property type="interactions" value="360"/>
</dbReference>
<dbReference type="STRING" id="3702.Q9SF23"/>
<dbReference type="iPTMnet" id="Q9SF23"/>
<dbReference type="PaxDb" id="3702-AT3G11750.1"/>
<dbReference type="ProteomicsDB" id="247375"/>
<dbReference type="EnsemblPlants" id="AT3G11750.1">
    <property type="protein sequence ID" value="AT3G11750.1"/>
    <property type="gene ID" value="AT3G11750"/>
</dbReference>
<dbReference type="GeneID" id="820348"/>
<dbReference type="Gramene" id="AT3G11750.1">
    <property type="protein sequence ID" value="AT3G11750.1"/>
    <property type="gene ID" value="AT3G11750"/>
</dbReference>
<dbReference type="KEGG" id="ath:AT3G11750"/>
<dbReference type="Araport" id="AT3G11750"/>
<dbReference type="TAIR" id="AT3G11750">
    <property type="gene designation" value="FOLB1"/>
</dbReference>
<dbReference type="eggNOG" id="ENOG502RZV8">
    <property type="taxonomic scope" value="Eukaryota"/>
</dbReference>
<dbReference type="HOGENOM" id="CLU_112632_1_0_1"/>
<dbReference type="InParanoid" id="Q9SF23"/>
<dbReference type="OMA" id="GTSENDM"/>
<dbReference type="OrthoDB" id="1863886at2759"/>
<dbReference type="PhylomeDB" id="Q9SF23"/>
<dbReference type="BioCyc" id="ARA:AT3G11750-MONOMER"/>
<dbReference type="BRENDA" id="4.1.2.25">
    <property type="organism ID" value="399"/>
</dbReference>
<dbReference type="BRENDA" id="4.1.2.60">
    <property type="organism ID" value="399"/>
</dbReference>
<dbReference type="BRENDA" id="5.1.99.8">
    <property type="organism ID" value="399"/>
</dbReference>
<dbReference type="UniPathway" id="UPA00077">
    <property type="reaction ID" value="UER00154"/>
</dbReference>
<dbReference type="EvolutionaryTrace" id="Q9SF23"/>
<dbReference type="PRO" id="PR:Q9SF23"/>
<dbReference type="Proteomes" id="UP000006548">
    <property type="component" value="Chromosome 3"/>
</dbReference>
<dbReference type="ExpressionAtlas" id="Q9SF23">
    <property type="expression patterns" value="baseline and differential"/>
</dbReference>
<dbReference type="GO" id="GO:0004150">
    <property type="term" value="F:dihydroneopterin aldolase activity"/>
    <property type="evidence" value="ECO:0000314"/>
    <property type="project" value="TAIR"/>
</dbReference>
<dbReference type="GO" id="GO:0046656">
    <property type="term" value="P:folic acid biosynthetic process"/>
    <property type="evidence" value="ECO:0007669"/>
    <property type="project" value="UniProtKB-KW"/>
</dbReference>
<dbReference type="GO" id="GO:0046654">
    <property type="term" value="P:tetrahydrofolate biosynthetic process"/>
    <property type="evidence" value="ECO:0007669"/>
    <property type="project" value="UniProtKB-UniPathway"/>
</dbReference>
<dbReference type="CDD" id="cd00534">
    <property type="entry name" value="DHNA_DHNTPE"/>
    <property type="match status" value="1"/>
</dbReference>
<dbReference type="FunFam" id="3.30.1130.10:FF:000003">
    <property type="entry name" value="7,8-dihydroneopterin aldolase"/>
    <property type="match status" value="1"/>
</dbReference>
<dbReference type="Gene3D" id="3.30.1130.10">
    <property type="match status" value="1"/>
</dbReference>
<dbReference type="InterPro" id="IPR006156">
    <property type="entry name" value="Dihydroneopterin_aldolase"/>
</dbReference>
<dbReference type="InterPro" id="IPR006157">
    <property type="entry name" value="FolB_dom"/>
</dbReference>
<dbReference type="InterPro" id="IPR043133">
    <property type="entry name" value="GTP-CH-I_C/QueF"/>
</dbReference>
<dbReference type="NCBIfam" id="TIGR00525">
    <property type="entry name" value="folB"/>
    <property type="match status" value="1"/>
</dbReference>
<dbReference type="NCBIfam" id="TIGR00526">
    <property type="entry name" value="folB_dom"/>
    <property type="match status" value="1"/>
</dbReference>
<dbReference type="PANTHER" id="PTHR42844">
    <property type="entry name" value="DIHYDRONEOPTERIN ALDOLASE 1-RELATED"/>
    <property type="match status" value="1"/>
</dbReference>
<dbReference type="PANTHER" id="PTHR42844:SF1">
    <property type="entry name" value="DIHYDRONEOPTERIN ALDOLASE 1-RELATED"/>
    <property type="match status" value="1"/>
</dbReference>
<dbReference type="Pfam" id="PF02152">
    <property type="entry name" value="FolB"/>
    <property type="match status" value="1"/>
</dbReference>
<dbReference type="SMART" id="SM00905">
    <property type="entry name" value="FolB"/>
    <property type="match status" value="1"/>
</dbReference>
<dbReference type="SUPFAM" id="SSF55620">
    <property type="entry name" value="Tetrahydrobiopterin biosynthesis enzymes-like"/>
    <property type="match status" value="1"/>
</dbReference>
<protein>
    <recommendedName>
        <fullName evidence="5">Dihydroneopterin aldolase 1</fullName>
        <shortName evidence="5">DHNA1</shortName>
        <ecNumber evidence="2 3">4.1.2.25</ecNumber>
    </recommendedName>
    <alternativeName>
        <fullName>7,8-dihydroneopterin aldolase</fullName>
    </alternativeName>
    <alternativeName>
        <fullName evidence="4">AtFolB1</fullName>
    </alternativeName>
</protein>
<gene>
    <name evidence="4" type="primary">FOLB1</name>
    <name type="ordered locus">At3g11750</name>
    <name type="ORF">F26K24.4</name>
</gene>
<evidence type="ECO:0000250" key="1">
    <source>
        <dbReference type="UniProtKB" id="P0AC16"/>
    </source>
</evidence>
<evidence type="ECO:0000269" key="2">
    <source>
    </source>
</evidence>
<evidence type="ECO:0000269" key="3">
    <source>
    </source>
</evidence>
<evidence type="ECO:0000303" key="4">
    <source>
    </source>
</evidence>
<evidence type="ECO:0000305" key="5"/>
<evidence type="ECO:0000305" key="6">
    <source>
    </source>
</evidence>
<evidence type="ECO:0007829" key="7">
    <source>
        <dbReference type="PDB" id="1SQL"/>
    </source>
</evidence>
<name>FOLB1_ARATH</name>
<keyword id="KW-0002">3D-structure</keyword>
<keyword id="KW-0903">Direct protein sequencing</keyword>
<keyword id="KW-0289">Folate biosynthesis</keyword>
<keyword id="KW-0456">Lyase</keyword>
<keyword id="KW-1185">Reference proteome</keyword>
<accession>Q9SF23</accession>
<accession>A2RVT4</accession>
<accession>Q6R8J1</accession>
<feature type="chain" id="PRO_0000168294" description="Dihydroneopterin aldolase 1">
    <location>
        <begin position="1"/>
        <end position="146"/>
    </location>
</feature>
<feature type="active site" description="Proton donor/acceptor" evidence="6">
    <location>
        <position position="119"/>
    </location>
</feature>
<feature type="binding site" evidence="1 6">
    <location>
        <position position="41"/>
    </location>
    <ligand>
        <name>substrate</name>
    </ligand>
</feature>
<feature type="binding site" evidence="1 6">
    <location>
        <position position="73"/>
    </location>
    <ligand>
        <name>substrate</name>
    </ligand>
</feature>
<feature type="binding site" evidence="1 6">
    <location>
        <begin position="92"/>
        <end position="93"/>
    </location>
    <ligand>
        <name>substrate</name>
    </ligand>
</feature>
<feature type="strand" evidence="7">
    <location>
        <begin position="23"/>
        <end position="33"/>
    </location>
</feature>
<feature type="helix" evidence="7">
    <location>
        <begin position="39"/>
        <end position="44"/>
    </location>
</feature>
<feature type="strand" evidence="7">
    <location>
        <begin position="46"/>
        <end position="55"/>
    </location>
</feature>
<feature type="helix" evidence="7">
    <location>
        <begin position="59"/>
        <end position="64"/>
    </location>
</feature>
<feature type="helix" evidence="7">
    <location>
        <begin position="67"/>
        <end position="69"/>
    </location>
</feature>
<feature type="helix" evidence="7">
    <location>
        <begin position="73"/>
        <end position="84"/>
    </location>
</feature>
<feature type="helix" evidence="7">
    <location>
        <begin position="92"/>
        <end position="106"/>
    </location>
</feature>
<feature type="strand" evidence="7">
    <location>
        <begin position="112"/>
        <end position="121"/>
    </location>
</feature>
<feature type="strand" evidence="7">
    <location>
        <begin position="130"/>
        <end position="139"/>
    </location>
</feature>
<organism>
    <name type="scientific">Arabidopsis thaliana</name>
    <name type="common">Mouse-ear cress</name>
    <dbReference type="NCBI Taxonomy" id="3702"/>
    <lineage>
        <taxon>Eukaryota</taxon>
        <taxon>Viridiplantae</taxon>
        <taxon>Streptophyta</taxon>
        <taxon>Embryophyta</taxon>
        <taxon>Tracheophyta</taxon>
        <taxon>Spermatophyta</taxon>
        <taxon>Magnoliopsida</taxon>
        <taxon>eudicotyledons</taxon>
        <taxon>Gunneridae</taxon>
        <taxon>Pentapetalae</taxon>
        <taxon>rosids</taxon>
        <taxon>malvids</taxon>
        <taxon>Brassicales</taxon>
        <taxon>Brassicaceae</taxon>
        <taxon>Camelineae</taxon>
        <taxon>Arabidopsis</taxon>
    </lineage>
</organism>
<proteinExistence type="evidence at protein level"/>
<comment type="function">
    <text evidence="2 3">Catalyzes the conversion of 7,8-dihydroneopterin into 6-hydroxymethyl-7,8-dihydropterin, a biosynthetic precursor of the vitamin tetrahydrofolate. Can use L-threo-dihydroneopterin and D-erythro-dihydroneopterin as substrates for the formation of 6-hydroxymethyldihydropterin, but it can also catalyze the epimerization of carbon 2' of dihydroneopterin and dihydromonapterin.</text>
</comment>
<comment type="catalytic activity">
    <reaction evidence="2 3">
        <text>7,8-dihydroneopterin = 6-hydroxymethyl-7,8-dihydropterin + glycolaldehyde</text>
        <dbReference type="Rhea" id="RHEA:10540"/>
        <dbReference type="ChEBI" id="CHEBI:17001"/>
        <dbReference type="ChEBI" id="CHEBI:17071"/>
        <dbReference type="ChEBI" id="CHEBI:44841"/>
        <dbReference type="EC" id="4.1.2.25"/>
    </reaction>
</comment>
<comment type="pathway">
    <text evidence="5">Cofactor biosynthesis; tetrahydrofolate biosynthesis; 2-amino-4-hydroxy-6-hydroxymethyl-7,8-dihydropteridine diphosphate from 7,8-dihydroneopterin triphosphate: step 3/4.</text>
</comment>
<comment type="subunit">
    <text evidence="3">Homooctamer. Forms a hollow cylinder assembled from two ring-shaped tetramers.</text>
</comment>
<comment type="tissue specificity">
    <text evidence="2">Expressed in roots, leaves, stems and siliques.</text>
</comment>
<comment type="similarity">
    <text evidence="5">Belongs to the DHNA family.</text>
</comment>